<protein>
    <recommendedName>
        <fullName>Purkinje cell protein 2 homolog</fullName>
    </recommendedName>
</protein>
<gene>
    <name type="primary">PCP2</name>
</gene>
<keyword id="KW-0025">Alternative splicing</keyword>
<keyword id="KW-0597">Phosphoprotein</keyword>
<keyword id="KW-1267">Proteomics identification</keyword>
<keyword id="KW-1185">Reference proteome</keyword>
<keyword id="KW-0677">Repeat</keyword>
<accession>Q8IVA1</accession>
<accession>M0R2R7</accession>
<accession>Q3KRG7</accession>
<organism>
    <name type="scientific">Homo sapiens</name>
    <name type="common">Human</name>
    <dbReference type="NCBI Taxonomy" id="9606"/>
    <lineage>
        <taxon>Eukaryota</taxon>
        <taxon>Metazoa</taxon>
        <taxon>Chordata</taxon>
        <taxon>Craniata</taxon>
        <taxon>Vertebrata</taxon>
        <taxon>Euteleostomi</taxon>
        <taxon>Mammalia</taxon>
        <taxon>Eutheria</taxon>
        <taxon>Euarchontoglires</taxon>
        <taxon>Primates</taxon>
        <taxon>Haplorrhini</taxon>
        <taxon>Catarrhini</taxon>
        <taxon>Hominidae</taxon>
        <taxon>Homo</taxon>
    </lineage>
</organism>
<dbReference type="EMBL" id="AC008763">
    <property type="status" value="NOT_ANNOTATED_CDS"/>
    <property type="molecule type" value="Genomic_DNA"/>
</dbReference>
<dbReference type="EMBL" id="BC025387">
    <property type="protein sequence ID" value="AAH25387.1"/>
    <property type="molecule type" value="mRNA"/>
</dbReference>
<dbReference type="EMBL" id="BC038715">
    <property type="protein sequence ID" value="AAH38715.2"/>
    <property type="molecule type" value="mRNA"/>
</dbReference>
<dbReference type="CCDS" id="CCDS32893.1">
    <molecule id="Q8IVA1-1"/>
</dbReference>
<dbReference type="CCDS" id="CCDS62521.1">
    <molecule id="Q8IVA1-2"/>
</dbReference>
<dbReference type="RefSeq" id="NP_001258759.1">
    <molecule id="Q8IVA1-2"/>
    <property type="nucleotide sequence ID" value="NM_001271830.2"/>
</dbReference>
<dbReference type="RefSeq" id="NP_777555.1">
    <molecule id="Q8IVA1-1"/>
    <property type="nucleotide sequence ID" value="NM_174895.3"/>
</dbReference>
<dbReference type="RefSeq" id="XP_016881740.1">
    <property type="nucleotide sequence ID" value="XM_017026251.1"/>
</dbReference>
<dbReference type="RefSeq" id="XP_054175725.1">
    <molecule id="Q8IVA1-1"/>
    <property type="nucleotide sequence ID" value="XM_054319750.1"/>
</dbReference>
<dbReference type="RefSeq" id="XP_054175726.1">
    <molecule id="Q8IVA1-1"/>
    <property type="nucleotide sequence ID" value="XM_054319751.1"/>
</dbReference>
<dbReference type="BioGRID" id="125946">
    <property type="interactions" value="20"/>
</dbReference>
<dbReference type="FunCoup" id="Q8IVA1">
    <property type="interactions" value="31"/>
</dbReference>
<dbReference type="IntAct" id="Q8IVA1">
    <property type="interactions" value="11"/>
</dbReference>
<dbReference type="STRING" id="9606.ENSP00000310585"/>
<dbReference type="iPTMnet" id="Q8IVA1"/>
<dbReference type="PhosphoSitePlus" id="Q8IVA1"/>
<dbReference type="BioMuta" id="PCP2"/>
<dbReference type="DMDM" id="115311615"/>
<dbReference type="MassIVE" id="Q8IVA1"/>
<dbReference type="PaxDb" id="9606-ENSP00000310585"/>
<dbReference type="PeptideAtlas" id="Q8IVA1"/>
<dbReference type="ProteomicsDB" id="70677">
    <molecule id="Q8IVA1-1"/>
</dbReference>
<dbReference type="Antibodypedia" id="57393">
    <property type="antibodies" value="29 antibodies from 12 providers"/>
</dbReference>
<dbReference type="DNASU" id="126006"/>
<dbReference type="Ensembl" id="ENST00000311069.6">
    <molecule id="Q8IVA1-1"/>
    <property type="protein sequence ID" value="ENSP00000310585.4"/>
    <property type="gene ID" value="ENSG00000174788.10"/>
</dbReference>
<dbReference type="Ensembl" id="ENST00000598935.5">
    <molecule id="Q8IVA1-2"/>
    <property type="protein sequence ID" value="ENSP00000472761.1"/>
    <property type="gene ID" value="ENSG00000174788.10"/>
</dbReference>
<dbReference type="GeneID" id="126006"/>
<dbReference type="KEGG" id="hsa:126006"/>
<dbReference type="MANE-Select" id="ENST00000311069.6">
    <property type="protein sequence ID" value="ENSP00000310585.4"/>
    <property type="RefSeq nucleotide sequence ID" value="NM_174895.3"/>
    <property type="RefSeq protein sequence ID" value="NP_777555.1"/>
</dbReference>
<dbReference type="UCSC" id="uc002mgz.4">
    <molecule id="Q8IVA1-1"/>
    <property type="organism name" value="human"/>
</dbReference>
<dbReference type="AGR" id="HGNC:30209"/>
<dbReference type="CTD" id="126006"/>
<dbReference type="DisGeNET" id="126006"/>
<dbReference type="GeneCards" id="PCP2"/>
<dbReference type="HGNC" id="HGNC:30209">
    <property type="gene designation" value="PCP2"/>
</dbReference>
<dbReference type="HPA" id="ENSG00000174788">
    <property type="expression patterns" value="Group enriched (brain, retina, testis)"/>
</dbReference>
<dbReference type="MIM" id="619344">
    <property type="type" value="gene"/>
</dbReference>
<dbReference type="neXtProt" id="NX_Q8IVA1"/>
<dbReference type="OpenTargets" id="ENSG00000174788"/>
<dbReference type="PharmGKB" id="PA134864901"/>
<dbReference type="VEuPathDB" id="HostDB:ENSG00000174788"/>
<dbReference type="eggNOG" id="KOG1130">
    <property type="taxonomic scope" value="Eukaryota"/>
</dbReference>
<dbReference type="GeneTree" id="ENSGT00940000162025"/>
<dbReference type="HOGENOM" id="CLU_166511_0_0_1"/>
<dbReference type="InParanoid" id="Q8IVA1"/>
<dbReference type="OMA" id="LMDMVAH"/>
<dbReference type="OrthoDB" id="286233at2759"/>
<dbReference type="PAN-GO" id="Q8IVA1">
    <property type="GO annotations" value="1 GO annotation based on evolutionary models"/>
</dbReference>
<dbReference type="PhylomeDB" id="Q8IVA1"/>
<dbReference type="PathwayCommons" id="Q8IVA1"/>
<dbReference type="Reactome" id="R-HSA-418594">
    <property type="pathway name" value="G alpha (i) signalling events"/>
</dbReference>
<dbReference type="SignaLink" id="Q8IVA1"/>
<dbReference type="SIGNOR" id="Q8IVA1"/>
<dbReference type="BioGRID-ORCS" id="126006">
    <property type="hits" value="15 hits in 1154 CRISPR screens"/>
</dbReference>
<dbReference type="GenomeRNAi" id="126006"/>
<dbReference type="Pharos" id="Q8IVA1">
    <property type="development level" value="Tdark"/>
</dbReference>
<dbReference type="PRO" id="PR:Q8IVA1"/>
<dbReference type="Proteomes" id="UP000005640">
    <property type="component" value="Chromosome 19"/>
</dbReference>
<dbReference type="RNAct" id="Q8IVA1">
    <property type="molecule type" value="protein"/>
</dbReference>
<dbReference type="Bgee" id="ENSG00000174788">
    <property type="expression patterns" value="Expressed in left testis and 105 other cell types or tissues"/>
</dbReference>
<dbReference type="GO" id="GO:0005085">
    <property type="term" value="F:guanyl-nucleotide exchange factor activity"/>
    <property type="evidence" value="ECO:0000318"/>
    <property type="project" value="GO_Central"/>
</dbReference>
<dbReference type="GO" id="GO:0016056">
    <property type="term" value="P:G protein-coupled opsin signaling pathway"/>
    <property type="evidence" value="ECO:0007669"/>
    <property type="project" value="Ensembl"/>
</dbReference>
<dbReference type="FunFam" id="1.25.40.10:FF:000204">
    <property type="entry name" value="Purkinje cell protein 2 homolog"/>
    <property type="match status" value="1"/>
</dbReference>
<dbReference type="Gene3D" id="1.25.40.10">
    <property type="entry name" value="Tetratricopeptide repeat domain"/>
    <property type="match status" value="1"/>
</dbReference>
<dbReference type="InterPro" id="IPR003109">
    <property type="entry name" value="GoLoco_motif"/>
</dbReference>
<dbReference type="InterPro" id="IPR042168">
    <property type="entry name" value="Pcp2"/>
</dbReference>
<dbReference type="InterPro" id="IPR011990">
    <property type="entry name" value="TPR-like_helical_dom_sf"/>
</dbReference>
<dbReference type="PANTHER" id="PTHR47503">
    <property type="entry name" value="PURKINJE CELL PROTEIN 2"/>
    <property type="match status" value="1"/>
</dbReference>
<dbReference type="PANTHER" id="PTHR47503:SF1">
    <property type="entry name" value="PURKINJE CELL PROTEIN 2 HOMOLOG"/>
    <property type="match status" value="1"/>
</dbReference>
<dbReference type="Pfam" id="PF02188">
    <property type="entry name" value="GoLoco"/>
    <property type="match status" value="2"/>
</dbReference>
<dbReference type="SMART" id="SM00390">
    <property type="entry name" value="GoLoco"/>
    <property type="match status" value="2"/>
</dbReference>
<dbReference type="PROSITE" id="PS50877">
    <property type="entry name" value="GOLOCO"/>
    <property type="match status" value="2"/>
</dbReference>
<name>PCP2_HUMAN</name>
<comment type="function">
    <text evidence="1">May function as a cell-type specific modulator for G protein-mediated cell signaling.</text>
</comment>
<comment type="interaction">
    <interactant intactId="EBI-12250122">
        <id>Q8IVA1</id>
    </interactant>
    <interactant intactId="EBI-618639">
        <id>P63096</id>
        <label>GNAI1</label>
    </interactant>
    <organismsDiffer>false</organismsDiffer>
    <experiments>6</experiments>
</comment>
<comment type="interaction">
    <interactant intactId="EBI-12250122">
        <id>Q8IVA1</id>
    </interactant>
    <interactant intactId="EBI-353997">
        <id>P04899</id>
        <label>GNAI2</label>
    </interactant>
    <organismsDiffer>false</organismsDiffer>
    <experiments>3</experiments>
</comment>
<comment type="interaction">
    <interactant intactId="EBI-12250122">
        <id>Q8IVA1</id>
    </interactant>
    <interactant intactId="EBI-357563">
        <id>P08754</id>
        <label>GNAI3</label>
    </interactant>
    <organismsDiffer>false</organismsDiffer>
    <experiments>9</experiments>
</comment>
<comment type="interaction">
    <interactant intactId="EBI-12250122">
        <id>Q8IVA1</id>
    </interactant>
    <interactant intactId="EBI-2864512">
        <id>P50221</id>
        <label>MEOX1</label>
    </interactant>
    <organismsDiffer>false</organismsDiffer>
    <experiments>3</experiments>
</comment>
<comment type="alternative products">
    <event type="alternative splicing"/>
    <isoform>
        <id>Q8IVA1-1</id>
        <name>1</name>
        <sequence type="displayed"/>
    </isoform>
    <isoform>
        <id>Q8IVA1-2</id>
        <name>2</name>
        <sequence type="described" ref="VSP_055654"/>
    </isoform>
</comment>
<evidence type="ECO:0000250" key="1"/>
<evidence type="ECO:0000250" key="2">
    <source>
        <dbReference type="UniProtKB" id="P12660"/>
    </source>
</evidence>
<evidence type="ECO:0000255" key="3">
    <source>
        <dbReference type="PROSITE-ProRule" id="PRU00097"/>
    </source>
</evidence>
<evidence type="ECO:0000256" key="4">
    <source>
        <dbReference type="SAM" id="MobiDB-lite"/>
    </source>
</evidence>
<evidence type="ECO:0000303" key="5">
    <source>
    </source>
</evidence>
<proteinExistence type="evidence at protein level"/>
<feature type="chain" id="PRO_0000058260" description="Purkinje cell protein 2 homolog">
    <location>
        <begin position="1"/>
        <end position="136"/>
    </location>
</feature>
<feature type="domain" description="GoLoco 1" evidence="3">
    <location>
        <begin position="23"/>
        <end position="45"/>
    </location>
</feature>
<feature type="domain" description="GoLoco 2" evidence="3">
    <location>
        <begin position="63"/>
        <end position="85"/>
    </location>
</feature>
<feature type="region of interest" description="Disordered" evidence="4">
    <location>
        <begin position="1"/>
        <end position="64"/>
    </location>
</feature>
<feature type="region of interest" description="Disordered" evidence="4">
    <location>
        <begin position="86"/>
        <end position="136"/>
    </location>
</feature>
<feature type="compositionally biased region" description="Polar residues" evidence="4">
    <location>
        <begin position="49"/>
        <end position="59"/>
    </location>
</feature>
<feature type="compositionally biased region" description="Polar residues" evidence="4">
    <location>
        <begin position="107"/>
        <end position="117"/>
    </location>
</feature>
<feature type="modified residue" description="Phosphoserine" evidence="2">
    <location>
        <position position="127"/>
    </location>
</feature>
<feature type="splice variant" id="VSP_055654" description="In isoform 2." evidence="5">
    <original>MMDQEEKTEEGSGPCAE</original>
    <variation>M</variation>
    <location>
        <begin position="1"/>
        <end position="17"/>
    </location>
</feature>
<sequence length="136" mass="14547">MMDQEEKTEEGSGPCAEAGSPDQEGFFNLLSHVQGDRMEGQRCSLQAGPGQTTKSQSDPTPEMDSLMDMLASTQGRRMDDQRVTVSSLPGFQPVGSKDGAQKRAGTLSPQPLLTPQDPTALGFRRNSSPQPPTQAP</sequence>
<reference key="1">
    <citation type="journal article" date="2004" name="Nature">
        <title>The DNA sequence and biology of human chromosome 19.</title>
        <authorList>
            <person name="Grimwood J."/>
            <person name="Gordon L.A."/>
            <person name="Olsen A.S."/>
            <person name="Terry A."/>
            <person name="Schmutz J."/>
            <person name="Lamerdin J.E."/>
            <person name="Hellsten U."/>
            <person name="Goodstein D."/>
            <person name="Couronne O."/>
            <person name="Tran-Gyamfi M."/>
            <person name="Aerts A."/>
            <person name="Altherr M."/>
            <person name="Ashworth L."/>
            <person name="Bajorek E."/>
            <person name="Black S."/>
            <person name="Branscomb E."/>
            <person name="Caenepeel S."/>
            <person name="Carrano A.V."/>
            <person name="Caoile C."/>
            <person name="Chan Y.M."/>
            <person name="Christensen M."/>
            <person name="Cleland C.A."/>
            <person name="Copeland A."/>
            <person name="Dalin E."/>
            <person name="Dehal P."/>
            <person name="Denys M."/>
            <person name="Detter J.C."/>
            <person name="Escobar J."/>
            <person name="Flowers D."/>
            <person name="Fotopulos D."/>
            <person name="Garcia C."/>
            <person name="Georgescu A.M."/>
            <person name="Glavina T."/>
            <person name="Gomez M."/>
            <person name="Gonzales E."/>
            <person name="Groza M."/>
            <person name="Hammon N."/>
            <person name="Hawkins T."/>
            <person name="Haydu L."/>
            <person name="Ho I."/>
            <person name="Huang W."/>
            <person name="Israni S."/>
            <person name="Jett J."/>
            <person name="Kadner K."/>
            <person name="Kimball H."/>
            <person name="Kobayashi A."/>
            <person name="Larionov V."/>
            <person name="Leem S.-H."/>
            <person name="Lopez F."/>
            <person name="Lou Y."/>
            <person name="Lowry S."/>
            <person name="Malfatti S."/>
            <person name="Martinez D."/>
            <person name="McCready P.M."/>
            <person name="Medina C."/>
            <person name="Morgan J."/>
            <person name="Nelson K."/>
            <person name="Nolan M."/>
            <person name="Ovcharenko I."/>
            <person name="Pitluck S."/>
            <person name="Pollard M."/>
            <person name="Popkie A.P."/>
            <person name="Predki P."/>
            <person name="Quan G."/>
            <person name="Ramirez L."/>
            <person name="Rash S."/>
            <person name="Retterer J."/>
            <person name="Rodriguez A."/>
            <person name="Rogers S."/>
            <person name="Salamov A."/>
            <person name="Salazar A."/>
            <person name="She X."/>
            <person name="Smith D."/>
            <person name="Slezak T."/>
            <person name="Solovyev V."/>
            <person name="Thayer N."/>
            <person name="Tice H."/>
            <person name="Tsai M."/>
            <person name="Ustaszewska A."/>
            <person name="Vo N."/>
            <person name="Wagner M."/>
            <person name="Wheeler J."/>
            <person name="Wu K."/>
            <person name="Xie G."/>
            <person name="Yang J."/>
            <person name="Dubchak I."/>
            <person name="Furey T.S."/>
            <person name="DeJong P."/>
            <person name="Dickson M."/>
            <person name="Gordon D."/>
            <person name="Eichler E.E."/>
            <person name="Pennacchio L.A."/>
            <person name="Richardson P."/>
            <person name="Stubbs L."/>
            <person name="Rokhsar D.S."/>
            <person name="Myers R.M."/>
            <person name="Rubin E.M."/>
            <person name="Lucas S.M."/>
        </authorList>
    </citation>
    <scope>NUCLEOTIDE SEQUENCE [LARGE SCALE GENOMIC DNA]</scope>
</reference>
<reference key="2">
    <citation type="journal article" date="2004" name="Genome Res.">
        <title>The status, quality, and expansion of the NIH full-length cDNA project: the Mammalian Gene Collection (MGC).</title>
        <authorList>
            <consortium name="The MGC Project Team"/>
        </authorList>
    </citation>
    <scope>NUCLEOTIDE SEQUENCE [LARGE SCALE MRNA] (ISOFORM 2)</scope>
    <source>
        <tissue>Testis</tissue>
    </source>
</reference>